<comment type="function">
    <text evidence="1">F(1)F(0) ATP synthase produces ATP from ADP in the presence of a proton or sodium gradient. F-type ATPases consist of two structural domains, F(1) containing the extramembraneous catalytic core and F(0) containing the membrane proton channel, linked together by a central stalk and a peripheral stalk. During catalysis, ATP synthesis in the catalytic domain of F(1) is coupled via a rotary mechanism of the central stalk subunits to proton translocation.</text>
</comment>
<comment type="function">
    <text evidence="1">This protein is part of the stalk that links CF(0) to CF(1). It either transmits conformational changes from CF(0) to CF(1) or is implicated in proton conduction.</text>
</comment>
<comment type="subunit">
    <text evidence="1">F-type ATPases have 2 components, F(1) - the catalytic core - and F(0) - the membrane proton channel. F(1) has five subunits: alpha(3), beta(3), gamma(1), delta(1), epsilon(1). F(0) has three main subunits: a(1), b(2) and c(10-14). The alpha and beta chains form an alternating ring which encloses part of the gamma chain. F(1) is attached to F(0) by a central stalk formed by the gamma and epsilon chains, while a peripheral stalk is formed by the delta and b chains.</text>
</comment>
<comment type="subcellular location">
    <subcellularLocation>
        <location evidence="1">Cell membrane</location>
        <topology evidence="1">Peripheral membrane protein</topology>
    </subcellularLocation>
</comment>
<comment type="similarity">
    <text evidence="1">Belongs to the ATPase delta chain family.</text>
</comment>
<dbReference type="EMBL" id="AP009493">
    <property type="protein sequence ID" value="BAG18995.1"/>
    <property type="molecule type" value="Genomic_DNA"/>
</dbReference>
<dbReference type="RefSeq" id="WP_003966252.1">
    <property type="nucleotide sequence ID" value="NC_010572.1"/>
</dbReference>
<dbReference type="SMR" id="B1W0A6"/>
<dbReference type="KEGG" id="sgr:SGR_2166"/>
<dbReference type="eggNOG" id="COG0712">
    <property type="taxonomic scope" value="Bacteria"/>
</dbReference>
<dbReference type="HOGENOM" id="CLU_088880_0_0_11"/>
<dbReference type="Proteomes" id="UP000001685">
    <property type="component" value="Chromosome"/>
</dbReference>
<dbReference type="GO" id="GO:0005886">
    <property type="term" value="C:plasma membrane"/>
    <property type="evidence" value="ECO:0007669"/>
    <property type="project" value="UniProtKB-SubCell"/>
</dbReference>
<dbReference type="GO" id="GO:0045259">
    <property type="term" value="C:proton-transporting ATP synthase complex"/>
    <property type="evidence" value="ECO:0007669"/>
    <property type="project" value="UniProtKB-KW"/>
</dbReference>
<dbReference type="GO" id="GO:0046933">
    <property type="term" value="F:proton-transporting ATP synthase activity, rotational mechanism"/>
    <property type="evidence" value="ECO:0007669"/>
    <property type="project" value="UniProtKB-UniRule"/>
</dbReference>
<dbReference type="Gene3D" id="1.10.520.20">
    <property type="entry name" value="N-terminal domain of the delta subunit of the F1F0-ATP synthase"/>
    <property type="match status" value="1"/>
</dbReference>
<dbReference type="HAMAP" id="MF_01416">
    <property type="entry name" value="ATP_synth_delta_bact"/>
    <property type="match status" value="1"/>
</dbReference>
<dbReference type="InterPro" id="IPR026015">
    <property type="entry name" value="ATP_synth_OSCP/delta_N_sf"/>
</dbReference>
<dbReference type="InterPro" id="IPR000711">
    <property type="entry name" value="ATPase_OSCP/dsu"/>
</dbReference>
<dbReference type="NCBIfam" id="TIGR01145">
    <property type="entry name" value="ATP_synt_delta"/>
    <property type="match status" value="1"/>
</dbReference>
<dbReference type="NCBIfam" id="NF009967">
    <property type="entry name" value="PRK13430.1"/>
    <property type="match status" value="1"/>
</dbReference>
<dbReference type="PANTHER" id="PTHR11910">
    <property type="entry name" value="ATP SYNTHASE DELTA CHAIN"/>
    <property type="match status" value="1"/>
</dbReference>
<dbReference type="Pfam" id="PF00213">
    <property type="entry name" value="OSCP"/>
    <property type="match status" value="1"/>
</dbReference>
<dbReference type="PRINTS" id="PR00125">
    <property type="entry name" value="ATPASEDELTA"/>
</dbReference>
<dbReference type="SUPFAM" id="SSF47928">
    <property type="entry name" value="N-terminal domain of the delta subunit of the F1F0-ATP synthase"/>
    <property type="match status" value="1"/>
</dbReference>
<keyword id="KW-0066">ATP synthesis</keyword>
<keyword id="KW-1003">Cell membrane</keyword>
<keyword id="KW-0139">CF(1)</keyword>
<keyword id="KW-0375">Hydrogen ion transport</keyword>
<keyword id="KW-0406">Ion transport</keyword>
<keyword id="KW-0472">Membrane</keyword>
<keyword id="KW-0813">Transport</keyword>
<gene>
    <name evidence="1" type="primary">atpH</name>
    <name type="ordered locus">SGR_2166</name>
</gene>
<evidence type="ECO:0000255" key="1">
    <source>
        <dbReference type="HAMAP-Rule" id="MF_01416"/>
    </source>
</evidence>
<protein>
    <recommendedName>
        <fullName evidence="1">ATP synthase subunit delta</fullName>
    </recommendedName>
    <alternativeName>
        <fullName evidence="1">ATP synthase F(1) sector subunit delta</fullName>
    </alternativeName>
    <alternativeName>
        <fullName evidence="1">F-type ATPase subunit delta</fullName>
        <shortName evidence="1">F-ATPase subunit delta</shortName>
    </alternativeName>
</protein>
<feature type="chain" id="PRO_0000371172" description="ATP synthase subunit delta">
    <location>
        <begin position="1"/>
        <end position="271"/>
    </location>
</feature>
<sequence length="271" mass="28962">MNSASREALAAARERLDALTDNTSVDAAKLAEELASVTALLDREVSLRRVLTDPAQSGESKAELAARLLGGQVGGETLDLVSGLVRSRWSQSRDLVDSVEELANTADLTAAQRGGNLDDVEDELFRFGRIVGSDKELRSALTSRTATASAKGELLRSLLGGKAQPVTERIIVRLVTQPRGRSLEAGLDSLSKLAAERRDRMVAVVTSAVPLSDRQKQRLGAALAKLYGRQMHLNLDVDPAVLGGISVRVGDEIINGTVAERLEEATRRMAG</sequence>
<proteinExistence type="inferred from homology"/>
<name>ATPD_STRGG</name>
<accession>B1W0A6</accession>
<organism>
    <name type="scientific">Streptomyces griseus subsp. griseus (strain JCM 4626 / CBS 651.72 / NBRC 13350 / KCC S-0626 / ISP 5235)</name>
    <dbReference type="NCBI Taxonomy" id="455632"/>
    <lineage>
        <taxon>Bacteria</taxon>
        <taxon>Bacillati</taxon>
        <taxon>Actinomycetota</taxon>
        <taxon>Actinomycetes</taxon>
        <taxon>Kitasatosporales</taxon>
        <taxon>Streptomycetaceae</taxon>
        <taxon>Streptomyces</taxon>
    </lineage>
</organism>
<reference key="1">
    <citation type="journal article" date="2008" name="J. Bacteriol.">
        <title>Genome sequence of the streptomycin-producing microorganism Streptomyces griseus IFO 13350.</title>
        <authorList>
            <person name="Ohnishi Y."/>
            <person name="Ishikawa J."/>
            <person name="Hara H."/>
            <person name="Suzuki H."/>
            <person name="Ikenoya M."/>
            <person name="Ikeda H."/>
            <person name="Yamashita A."/>
            <person name="Hattori M."/>
            <person name="Horinouchi S."/>
        </authorList>
    </citation>
    <scope>NUCLEOTIDE SEQUENCE [LARGE SCALE GENOMIC DNA]</scope>
    <source>
        <strain>JCM 4626 / CBS 651.72 / NBRC 13350 / KCC S-0626 / ISP 5235</strain>
    </source>
</reference>